<accession>Q82X87</accession>
<proteinExistence type="inferred from homology"/>
<keyword id="KW-1185">Reference proteome</keyword>
<keyword id="KW-0687">Ribonucleoprotein</keyword>
<keyword id="KW-0689">Ribosomal protein</keyword>
<keyword id="KW-0694">RNA-binding</keyword>
<keyword id="KW-0699">rRNA-binding</keyword>
<evidence type="ECO:0000255" key="1">
    <source>
        <dbReference type="HAMAP-Rule" id="MF_01328"/>
    </source>
</evidence>
<evidence type="ECO:0000256" key="2">
    <source>
        <dbReference type="SAM" id="MobiDB-lite"/>
    </source>
</evidence>
<evidence type="ECO:0000305" key="3"/>
<comment type="function">
    <text evidence="1">One of the primary rRNA binding proteins, this protein initially binds near the 5'-end of the 23S rRNA. It is important during the early stages of 50S assembly. It makes multiple contacts with different domains of the 23S rRNA in the assembled 50S subunit and ribosome.</text>
</comment>
<comment type="function">
    <text evidence="1">Forms part of the polypeptide exit tunnel.</text>
</comment>
<comment type="subunit">
    <text evidence="1">Part of the 50S ribosomal subunit.</text>
</comment>
<comment type="similarity">
    <text evidence="1">Belongs to the universal ribosomal protein uL4 family.</text>
</comment>
<feature type="chain" id="PRO_0000129250" description="Large ribosomal subunit protein uL4">
    <location>
        <begin position="1"/>
        <end position="206"/>
    </location>
</feature>
<feature type="region of interest" description="Disordered" evidence="2">
    <location>
        <begin position="47"/>
        <end position="77"/>
    </location>
</feature>
<protein>
    <recommendedName>
        <fullName evidence="1">Large ribosomal subunit protein uL4</fullName>
    </recommendedName>
    <alternativeName>
        <fullName evidence="3">50S ribosomal protein L4</fullName>
    </alternativeName>
</protein>
<name>RL4_NITEU</name>
<reference key="1">
    <citation type="journal article" date="2003" name="J. Bacteriol.">
        <title>Complete genome sequence of the ammonia-oxidizing bacterium and obligate chemolithoautotroph Nitrosomonas europaea.</title>
        <authorList>
            <person name="Chain P."/>
            <person name="Lamerdin J.E."/>
            <person name="Larimer F.W."/>
            <person name="Regala W."/>
            <person name="Lao V."/>
            <person name="Land M.L."/>
            <person name="Hauser L."/>
            <person name="Hooper A.B."/>
            <person name="Klotz M.G."/>
            <person name="Norton J."/>
            <person name="Sayavedra-Soto L.A."/>
            <person name="Arciero D.M."/>
            <person name="Hommes N.G."/>
            <person name="Whittaker M.M."/>
            <person name="Arp D.J."/>
        </authorList>
    </citation>
    <scope>NUCLEOTIDE SEQUENCE [LARGE SCALE GENOMIC DNA]</scope>
    <source>
        <strain>ATCC 19718 / CIP 103999 / KCTC 2705 / NBRC 14298</strain>
    </source>
</reference>
<dbReference type="EMBL" id="AL954747">
    <property type="protein sequence ID" value="CAD84313.1"/>
    <property type="molecule type" value="Genomic_DNA"/>
</dbReference>
<dbReference type="RefSeq" id="WP_011111037.1">
    <property type="nucleotide sequence ID" value="NC_004757.1"/>
</dbReference>
<dbReference type="SMR" id="Q82X87"/>
<dbReference type="STRING" id="228410.NE0402"/>
<dbReference type="GeneID" id="87103612"/>
<dbReference type="KEGG" id="neu:NE0402"/>
<dbReference type="eggNOG" id="COG0088">
    <property type="taxonomic scope" value="Bacteria"/>
</dbReference>
<dbReference type="HOGENOM" id="CLU_041575_5_2_4"/>
<dbReference type="OrthoDB" id="9803201at2"/>
<dbReference type="PhylomeDB" id="Q82X87"/>
<dbReference type="Proteomes" id="UP000001416">
    <property type="component" value="Chromosome"/>
</dbReference>
<dbReference type="GO" id="GO:1990904">
    <property type="term" value="C:ribonucleoprotein complex"/>
    <property type="evidence" value="ECO:0007669"/>
    <property type="project" value="UniProtKB-KW"/>
</dbReference>
<dbReference type="GO" id="GO:0005840">
    <property type="term" value="C:ribosome"/>
    <property type="evidence" value="ECO:0007669"/>
    <property type="project" value="UniProtKB-KW"/>
</dbReference>
<dbReference type="GO" id="GO:0019843">
    <property type="term" value="F:rRNA binding"/>
    <property type="evidence" value="ECO:0007669"/>
    <property type="project" value="UniProtKB-UniRule"/>
</dbReference>
<dbReference type="GO" id="GO:0003735">
    <property type="term" value="F:structural constituent of ribosome"/>
    <property type="evidence" value="ECO:0007669"/>
    <property type="project" value="InterPro"/>
</dbReference>
<dbReference type="GO" id="GO:0006412">
    <property type="term" value="P:translation"/>
    <property type="evidence" value="ECO:0007669"/>
    <property type="project" value="UniProtKB-UniRule"/>
</dbReference>
<dbReference type="Gene3D" id="3.40.1370.10">
    <property type="match status" value="1"/>
</dbReference>
<dbReference type="HAMAP" id="MF_01328_B">
    <property type="entry name" value="Ribosomal_uL4_B"/>
    <property type="match status" value="1"/>
</dbReference>
<dbReference type="InterPro" id="IPR002136">
    <property type="entry name" value="Ribosomal_uL4"/>
</dbReference>
<dbReference type="InterPro" id="IPR013005">
    <property type="entry name" value="Ribosomal_uL4-like"/>
</dbReference>
<dbReference type="InterPro" id="IPR023574">
    <property type="entry name" value="Ribosomal_uL4_dom_sf"/>
</dbReference>
<dbReference type="NCBIfam" id="TIGR03953">
    <property type="entry name" value="rplD_bact"/>
    <property type="match status" value="1"/>
</dbReference>
<dbReference type="PANTHER" id="PTHR10746">
    <property type="entry name" value="50S RIBOSOMAL PROTEIN L4"/>
    <property type="match status" value="1"/>
</dbReference>
<dbReference type="PANTHER" id="PTHR10746:SF6">
    <property type="entry name" value="LARGE RIBOSOMAL SUBUNIT PROTEIN UL4M"/>
    <property type="match status" value="1"/>
</dbReference>
<dbReference type="Pfam" id="PF00573">
    <property type="entry name" value="Ribosomal_L4"/>
    <property type="match status" value="1"/>
</dbReference>
<dbReference type="SUPFAM" id="SSF52166">
    <property type="entry name" value="Ribosomal protein L4"/>
    <property type="match status" value="1"/>
</dbReference>
<gene>
    <name evidence="1" type="primary">rplD</name>
    <name type="ordered locus">NE0402</name>
</gene>
<organism>
    <name type="scientific">Nitrosomonas europaea (strain ATCC 19718 / CIP 103999 / KCTC 2705 / NBRC 14298)</name>
    <dbReference type="NCBI Taxonomy" id="228410"/>
    <lineage>
        <taxon>Bacteria</taxon>
        <taxon>Pseudomonadati</taxon>
        <taxon>Pseudomonadota</taxon>
        <taxon>Betaproteobacteria</taxon>
        <taxon>Nitrosomonadales</taxon>
        <taxon>Nitrosomonadaceae</taxon>
        <taxon>Nitrosomonas</taxon>
    </lineage>
</organism>
<sequence>MVKIPCIYENGQIEDIEASESVFGRVYNEALVHQVVKSYLANARAGTRAQKGRSDVTGSTRKQWRQKGTGRARTGAATNPLWRGGGKIFPNKPTENFKQKLNRKMYRAGMCTIFSELLRNNKLVAIDEFQIEMPKTKVCLQKLKNYQLENVMIITSEIDSNLYLASRNLPNLKVVEVDLIDPVSLLAYDNVVITRDTVNKIENVLQ</sequence>